<name>NPL4_NEUCR</name>
<proteinExistence type="inferred from homology"/>
<comment type="function">
    <text evidence="1">Involved in the import of nuclear-targeted proteins into the nucleus and the export of poly(A) RNA out of the nucleus. Has a role in the endoplasmic reticulum-associated degradation (ERAD) pathway (By similarity).</text>
</comment>
<comment type="subcellular location">
    <subcellularLocation>
        <location evidence="1">Cytoplasm</location>
        <location evidence="1">Perinuclear region</location>
    </subcellularLocation>
    <subcellularLocation>
        <location evidence="1">Endoplasmic reticulum membrane</location>
        <topology evidence="1">Peripheral membrane protein</topology>
        <orientation evidence="1">Cytoplasmic side</orientation>
    </subcellularLocation>
    <subcellularLocation>
        <location evidence="1">Nucleus membrane</location>
        <topology evidence="1">Peripheral membrane protein</topology>
        <orientation evidence="1">Cytoplasmic side</orientation>
    </subcellularLocation>
    <text evidence="1">Localizes mainly at the nuclear periphery and the endoplasmic reticulum membrane.</text>
</comment>
<comment type="similarity">
    <text evidence="4">Belongs to the NPL4 family.</text>
</comment>
<comment type="sequence caution" evidence="4">
    <conflict type="erroneous gene model prediction">
        <sequence resource="EMBL-CDS" id="CAE76489"/>
    </conflict>
</comment>
<comment type="sequence caution" evidence="4">
    <conflict type="erroneous gene model prediction">
        <sequence resource="EMBL-CDS" id="ESA43954"/>
    </conflict>
</comment>
<gene>
    <name type="primary">npl4</name>
    <name type="ORF">NCU02680</name>
</gene>
<feature type="chain" id="PRO_0000339450" description="Nuclear protein localization protein 4">
    <location>
        <begin position="1"/>
        <end position="660"/>
    </location>
</feature>
<feature type="domain" description="MPN" evidence="2">
    <location>
        <begin position="263"/>
        <end position="400"/>
    </location>
</feature>
<feature type="region of interest" description="Disordered" evidence="3">
    <location>
        <begin position="621"/>
        <end position="660"/>
    </location>
</feature>
<dbReference type="EMBL" id="BX842634">
    <property type="protein sequence ID" value="CAE76489.1"/>
    <property type="status" value="ALT_SEQ"/>
    <property type="molecule type" value="Genomic_DNA"/>
</dbReference>
<dbReference type="EMBL" id="CM002236">
    <property type="protein sequence ID" value="ESA43954.1"/>
    <property type="status" value="ALT_SEQ"/>
    <property type="molecule type" value="Genomic_DNA"/>
</dbReference>
<dbReference type="RefSeq" id="XP_011393000.1">
    <property type="nucleotide sequence ID" value="XM_011394698.1"/>
</dbReference>
<dbReference type="SMR" id="Q7SH49"/>
<dbReference type="FunCoup" id="Q7SH49">
    <property type="interactions" value="921"/>
</dbReference>
<dbReference type="STRING" id="367110.Q7SH49"/>
<dbReference type="PaxDb" id="5141-EFNCRP00000002053"/>
<dbReference type="EnsemblFungi" id="ESA43954">
    <property type="protein sequence ID" value="ESA43954"/>
    <property type="gene ID" value="NCU02680"/>
</dbReference>
<dbReference type="GeneID" id="3881619"/>
<dbReference type="KEGG" id="ncr:NCU02680"/>
<dbReference type="HOGENOM" id="CLU_017172_0_0_1"/>
<dbReference type="InParanoid" id="Q7SH49"/>
<dbReference type="OrthoDB" id="10251089at2759"/>
<dbReference type="Proteomes" id="UP000001805">
    <property type="component" value="Chromosome 1, Linkage Group I"/>
</dbReference>
<dbReference type="GO" id="GO:0005789">
    <property type="term" value="C:endoplasmic reticulum membrane"/>
    <property type="evidence" value="ECO:0007669"/>
    <property type="project" value="UniProtKB-SubCell"/>
</dbReference>
<dbReference type="GO" id="GO:0031965">
    <property type="term" value="C:nuclear membrane"/>
    <property type="evidence" value="ECO:0007669"/>
    <property type="project" value="UniProtKB-SubCell"/>
</dbReference>
<dbReference type="GO" id="GO:0005634">
    <property type="term" value="C:nucleus"/>
    <property type="evidence" value="ECO:0000318"/>
    <property type="project" value="GO_Central"/>
</dbReference>
<dbReference type="GO" id="GO:0048471">
    <property type="term" value="C:perinuclear region of cytoplasm"/>
    <property type="evidence" value="ECO:0007669"/>
    <property type="project" value="UniProtKB-SubCell"/>
</dbReference>
<dbReference type="GO" id="GO:0043130">
    <property type="term" value="F:ubiquitin binding"/>
    <property type="evidence" value="ECO:0000318"/>
    <property type="project" value="GO_Central"/>
</dbReference>
<dbReference type="GO" id="GO:0031625">
    <property type="term" value="F:ubiquitin protein ligase binding"/>
    <property type="evidence" value="ECO:0000318"/>
    <property type="project" value="GO_Central"/>
</dbReference>
<dbReference type="GO" id="GO:0051028">
    <property type="term" value="P:mRNA transport"/>
    <property type="evidence" value="ECO:0007669"/>
    <property type="project" value="UniProtKB-KW"/>
</dbReference>
<dbReference type="GO" id="GO:0015031">
    <property type="term" value="P:protein transport"/>
    <property type="evidence" value="ECO:0007669"/>
    <property type="project" value="UniProtKB-KW"/>
</dbReference>
<dbReference type="GO" id="GO:0006511">
    <property type="term" value="P:ubiquitin-dependent protein catabolic process"/>
    <property type="evidence" value="ECO:0000318"/>
    <property type="project" value="GO_Central"/>
</dbReference>
<dbReference type="CDD" id="cd08061">
    <property type="entry name" value="MPN_NPL4"/>
    <property type="match status" value="1"/>
</dbReference>
<dbReference type="FunFam" id="3.10.20.90:FF:000601">
    <property type="entry name" value="Nuclear protein localization protein 4, variant"/>
    <property type="match status" value="1"/>
</dbReference>
<dbReference type="FunFam" id="3.40.140.10:FF:000135">
    <property type="entry name" value="Nuclear protein localization protein 4, variant"/>
    <property type="match status" value="1"/>
</dbReference>
<dbReference type="Gene3D" id="3.40.140.10">
    <property type="entry name" value="Cytidine Deaminase, domain 2"/>
    <property type="match status" value="1"/>
</dbReference>
<dbReference type="Gene3D" id="3.10.20.90">
    <property type="entry name" value="Phosphatidylinositol 3-kinase Catalytic Subunit, Chain A, domain 1"/>
    <property type="match status" value="1"/>
</dbReference>
<dbReference type="InterPro" id="IPR037518">
    <property type="entry name" value="MPN"/>
</dbReference>
<dbReference type="InterPro" id="IPR016563">
    <property type="entry name" value="Npl4"/>
</dbReference>
<dbReference type="InterPro" id="IPR007717">
    <property type="entry name" value="NPL4_C"/>
</dbReference>
<dbReference type="InterPro" id="IPR007716">
    <property type="entry name" value="NPL4_Zn-bd_put"/>
</dbReference>
<dbReference type="InterPro" id="IPR029071">
    <property type="entry name" value="Ubiquitin-like_domsf"/>
</dbReference>
<dbReference type="PANTHER" id="PTHR12710">
    <property type="entry name" value="NUCLEAR PROTEIN LOCALIZATION 4"/>
    <property type="match status" value="1"/>
</dbReference>
<dbReference type="PANTHER" id="PTHR12710:SF0">
    <property type="entry name" value="NUCLEAR PROTEIN LOCALIZATION PROTEIN 4 HOMOLOG"/>
    <property type="match status" value="1"/>
</dbReference>
<dbReference type="Pfam" id="PF05021">
    <property type="entry name" value="NPL4"/>
    <property type="match status" value="1"/>
</dbReference>
<dbReference type="Pfam" id="PF05020">
    <property type="entry name" value="zf-NPL4"/>
    <property type="match status" value="1"/>
</dbReference>
<dbReference type="PIRSF" id="PIRSF010052">
    <property type="entry name" value="Polyub_prc_Npl4"/>
    <property type="match status" value="1"/>
</dbReference>
<dbReference type="SUPFAM" id="SSF54236">
    <property type="entry name" value="Ubiquitin-like"/>
    <property type="match status" value="1"/>
</dbReference>
<dbReference type="PROSITE" id="PS50249">
    <property type="entry name" value="MPN"/>
    <property type="match status" value="1"/>
</dbReference>
<evidence type="ECO:0000250" key="1"/>
<evidence type="ECO:0000255" key="2">
    <source>
        <dbReference type="PROSITE-ProRule" id="PRU01182"/>
    </source>
</evidence>
<evidence type="ECO:0000256" key="3">
    <source>
        <dbReference type="SAM" id="MobiDB-lite"/>
    </source>
</evidence>
<evidence type="ECO:0000305" key="4"/>
<organism>
    <name type="scientific">Neurospora crassa (strain ATCC 24698 / 74-OR23-1A / CBS 708.71 / DSM 1257 / FGSC 987)</name>
    <dbReference type="NCBI Taxonomy" id="367110"/>
    <lineage>
        <taxon>Eukaryota</taxon>
        <taxon>Fungi</taxon>
        <taxon>Dikarya</taxon>
        <taxon>Ascomycota</taxon>
        <taxon>Pezizomycotina</taxon>
        <taxon>Sordariomycetes</taxon>
        <taxon>Sordariomycetidae</taxon>
        <taxon>Sordariales</taxon>
        <taxon>Sordariaceae</taxon>
        <taxon>Neurospora</taxon>
    </lineage>
</organism>
<reference key="1">
    <citation type="journal article" date="2003" name="Nucleic Acids Res.">
        <title>What's in the genome of a filamentous fungus? Analysis of the Neurospora genome sequence.</title>
        <authorList>
            <person name="Mannhaupt G."/>
            <person name="Montrone C."/>
            <person name="Haase D."/>
            <person name="Mewes H.-W."/>
            <person name="Aign V."/>
            <person name="Hoheisel J.D."/>
            <person name="Fartmann B."/>
            <person name="Nyakatura G."/>
            <person name="Kempken F."/>
            <person name="Maier J."/>
            <person name="Schulte U."/>
        </authorList>
    </citation>
    <scope>NUCLEOTIDE SEQUENCE [LARGE SCALE GENOMIC DNA]</scope>
    <source>
        <strain>ATCC 24698 / 74-OR23-1A / CBS 708.71 / DSM 1257 / FGSC 987</strain>
    </source>
</reference>
<reference key="2">
    <citation type="journal article" date="2003" name="Nature">
        <title>The genome sequence of the filamentous fungus Neurospora crassa.</title>
        <authorList>
            <person name="Galagan J.E."/>
            <person name="Calvo S.E."/>
            <person name="Borkovich K.A."/>
            <person name="Selker E.U."/>
            <person name="Read N.D."/>
            <person name="Jaffe D.B."/>
            <person name="FitzHugh W."/>
            <person name="Ma L.-J."/>
            <person name="Smirnov S."/>
            <person name="Purcell S."/>
            <person name="Rehman B."/>
            <person name="Elkins T."/>
            <person name="Engels R."/>
            <person name="Wang S."/>
            <person name="Nielsen C.B."/>
            <person name="Butler J."/>
            <person name="Endrizzi M."/>
            <person name="Qui D."/>
            <person name="Ianakiev P."/>
            <person name="Bell-Pedersen D."/>
            <person name="Nelson M.A."/>
            <person name="Werner-Washburne M."/>
            <person name="Selitrennikoff C.P."/>
            <person name="Kinsey J.A."/>
            <person name="Braun E.L."/>
            <person name="Zelter A."/>
            <person name="Schulte U."/>
            <person name="Kothe G.O."/>
            <person name="Jedd G."/>
            <person name="Mewes H.-W."/>
            <person name="Staben C."/>
            <person name="Marcotte E."/>
            <person name="Greenberg D."/>
            <person name="Roy A."/>
            <person name="Foley K."/>
            <person name="Naylor J."/>
            <person name="Stange-Thomann N."/>
            <person name="Barrett R."/>
            <person name="Gnerre S."/>
            <person name="Kamal M."/>
            <person name="Kamvysselis M."/>
            <person name="Mauceli E.W."/>
            <person name="Bielke C."/>
            <person name="Rudd S."/>
            <person name="Frishman D."/>
            <person name="Krystofova S."/>
            <person name="Rasmussen C."/>
            <person name="Metzenberg R.L."/>
            <person name="Perkins D.D."/>
            <person name="Kroken S."/>
            <person name="Cogoni C."/>
            <person name="Macino G."/>
            <person name="Catcheside D.E.A."/>
            <person name="Li W."/>
            <person name="Pratt R.J."/>
            <person name="Osmani S.A."/>
            <person name="DeSouza C.P.C."/>
            <person name="Glass N.L."/>
            <person name="Orbach M.J."/>
            <person name="Berglund J.A."/>
            <person name="Voelker R."/>
            <person name="Yarden O."/>
            <person name="Plamann M."/>
            <person name="Seiler S."/>
            <person name="Dunlap J.C."/>
            <person name="Radford A."/>
            <person name="Aramayo R."/>
            <person name="Natvig D.O."/>
            <person name="Alex L.A."/>
            <person name="Mannhaupt G."/>
            <person name="Ebbole D.J."/>
            <person name="Freitag M."/>
            <person name="Paulsen I."/>
            <person name="Sachs M.S."/>
            <person name="Lander E.S."/>
            <person name="Nusbaum C."/>
            <person name="Birren B.W."/>
        </authorList>
    </citation>
    <scope>NUCLEOTIDE SEQUENCE [LARGE SCALE GENOMIC DNA]</scope>
    <source>
        <strain>ATCC 24698 / 74-OR23-1A / CBS 708.71 / DSM 1257 / FGSC 987</strain>
    </source>
</reference>
<sequence length="660" mass="74045">MLLRVRGPDGMLRLTLEKDDTFADLGRQLIPKLPPTVDPKTITFSNHPTGSDAKNLSEVAKFKVGQTGLSHGDLIFVTYKHNDAATDGPGNGEATKSSVLSSTNRLNGKPILPAEDLPIDPPPLTSPHEHIKNPWETVRQSPLDDRLDKRDGKIPRGRDHKMCRHGPKGMCDYCMPLDPFNAKYLEEKKIKYMSVHAYLRKINSATNKPELGASFIPPLVEPYYRVKRDCPSGHPQWPEGICTKCQPSAITLQPQPFRMVDHVEFATPQIIDKFLNPWRMTGCQRLGILYGKYLEYDVVPLGVKAVVEAIYEPPQVDEIDGVTLNAWENEKDVNEVARLCGLEPVGVIWTDLLDAGKGDGSAICKRHSDSYFLAAQEICFAARLQAQHPKPTKWSDTGRFGSNFVTCVISGNEQGEISISAYQMSNDAVEMVRADIIEPSTDPGQMLVREEEEDDGSVSRTRYIPEVFYRKINEYGANVQENAKPAFPVEYLFVTLTHGFPESPRPVFTNDGFPIANREFVGEAQEASSVAKILKVNQKSDQFDVSNFHLLCFIRQMSVLSKDEEALLCRVATQHDLADAFQLRATEGWRTLHMILESTGERLPKRPRTEDASFPSVDRSYLSHHPLMQRNHNSTDEPLAKRFAAVRLNEQRPPPPPPPE</sequence>
<protein>
    <recommendedName>
        <fullName>Nuclear protein localization protein 4</fullName>
    </recommendedName>
</protein>
<accession>Q7SH49</accession>
<accession>V5IQV4</accession>
<keyword id="KW-0963">Cytoplasm</keyword>
<keyword id="KW-0256">Endoplasmic reticulum</keyword>
<keyword id="KW-0472">Membrane</keyword>
<keyword id="KW-0509">mRNA transport</keyword>
<keyword id="KW-0539">Nucleus</keyword>
<keyword id="KW-0653">Protein transport</keyword>
<keyword id="KW-1185">Reference proteome</keyword>
<keyword id="KW-0811">Translocation</keyword>
<keyword id="KW-0813">Transport</keyword>